<dbReference type="EC" id="2.2.1.1"/>
<dbReference type="Proteomes" id="UP000694918">
    <property type="component" value="Unplaced"/>
</dbReference>
<dbReference type="GO" id="GO:0004802">
    <property type="term" value="F:transketolase activity"/>
    <property type="evidence" value="ECO:0007669"/>
    <property type="project" value="UniProtKB-EC"/>
</dbReference>
<name>TKT_POPEU</name>
<keyword id="KW-0106">Calcium</keyword>
<keyword id="KW-0903">Direct protein sequencing</keyword>
<keyword id="KW-1185">Reference proteome</keyword>
<keyword id="KW-0786">Thiamine pyrophosphate</keyword>
<keyword id="KW-0808">Transferase</keyword>
<proteinExistence type="evidence at protein level"/>
<accession>P84540</accession>
<protein>
    <recommendedName>
        <fullName>Transketolase</fullName>
        <shortName>TK</shortName>
        <ecNumber>2.2.1.1</ecNumber>
    </recommendedName>
</protein>
<feature type="chain" id="PRO_0000191909" description="Transketolase">
    <location>
        <begin position="1" status="less than"/>
        <end position="15" status="greater than"/>
    </location>
</feature>
<feature type="non-terminal residue">
    <location>
        <position position="1"/>
    </location>
</feature>
<feature type="non-terminal residue">
    <location>
        <position position="15"/>
    </location>
</feature>
<evidence type="ECO:0000250" key="1"/>
<evidence type="ECO:0000250" key="2">
    <source>
        <dbReference type="UniProtKB" id="P23254"/>
    </source>
</evidence>
<evidence type="ECO:0000255" key="3"/>
<organism>
    <name type="scientific">Populus euphratica</name>
    <name type="common">Euphrates poplar</name>
    <dbReference type="NCBI Taxonomy" id="75702"/>
    <lineage>
        <taxon>Eukaryota</taxon>
        <taxon>Viridiplantae</taxon>
        <taxon>Streptophyta</taxon>
        <taxon>Embryophyta</taxon>
        <taxon>Tracheophyta</taxon>
        <taxon>Spermatophyta</taxon>
        <taxon>Magnoliopsida</taxon>
        <taxon>eudicotyledons</taxon>
        <taxon>Gunneridae</taxon>
        <taxon>Pentapetalae</taxon>
        <taxon>rosids</taxon>
        <taxon>fabids</taxon>
        <taxon>Malpighiales</taxon>
        <taxon>Salicaceae</taxon>
        <taxon>Saliceae</taxon>
        <taxon>Populus</taxon>
    </lineage>
</organism>
<reference key="1">
    <citation type="journal article" date="2006" name="Ann. Bot.">
        <title>Proteome profiling of Populus euphratica Oliv. upon heat stress.</title>
        <authorList>
            <person name="Ferreira S."/>
            <person name="Hjernoe K."/>
            <person name="Larsen M."/>
            <person name="Wingsle G."/>
            <person name="Larsen P."/>
            <person name="Fey S."/>
            <person name="Roepstorff P."/>
            <person name="Pais M.S."/>
        </authorList>
    </citation>
    <scope>PROTEIN SEQUENCE</scope>
    <source>
        <tissue>Leaf</tissue>
    </source>
</reference>
<sequence length="15" mass="1590">ALPTYTPESPADATR</sequence>
<comment type="function">
    <text evidence="1">Catalyzes the transfer of a two-carbon ketol group from a ketose donor to an aldose acceptor, via a covalent intermediate with the cofactor thiamine pyrophosphate.</text>
</comment>
<comment type="catalytic activity">
    <reaction evidence="2">
        <text>D-sedoheptulose 7-phosphate + D-glyceraldehyde 3-phosphate = aldehydo-D-ribose 5-phosphate + D-xylulose 5-phosphate</text>
        <dbReference type="Rhea" id="RHEA:10508"/>
        <dbReference type="ChEBI" id="CHEBI:57483"/>
        <dbReference type="ChEBI" id="CHEBI:57737"/>
        <dbReference type="ChEBI" id="CHEBI:58273"/>
        <dbReference type="ChEBI" id="CHEBI:59776"/>
        <dbReference type="EC" id="2.2.1.1"/>
    </reaction>
</comment>
<comment type="cofactor">
    <cofactor evidence="1">
        <name>Mg(2+)</name>
        <dbReference type="ChEBI" id="CHEBI:18420"/>
    </cofactor>
    <cofactor evidence="1">
        <name>Ca(2+)</name>
        <dbReference type="ChEBI" id="CHEBI:29108"/>
    </cofactor>
    <cofactor evidence="1">
        <name>Mn(2+)</name>
        <dbReference type="ChEBI" id="CHEBI:29035"/>
    </cofactor>
    <cofactor evidence="1">
        <name>Co(2+)</name>
        <dbReference type="ChEBI" id="CHEBI:48828"/>
    </cofactor>
    <text evidence="1">Binds 1 Mg(2+) ion per subunit. Can also utilize other divalent metal cations, such as Ca(2+), Mn(2+) and Co(2+).</text>
</comment>
<comment type="cofactor">
    <cofactor evidence="2">
        <name>thiamine diphosphate</name>
        <dbReference type="ChEBI" id="CHEBI:58937"/>
    </cofactor>
    <text evidence="2">Binds 1 thiamine pyrophosphate per subunit.</text>
</comment>
<comment type="subunit">
    <text evidence="2">Homodimer.</text>
</comment>
<comment type="similarity">
    <text evidence="3">Belongs to the transketolase family.</text>
</comment>